<sequence>MFIYDTKLKQKVPFEPLVEKKANIYVCGPTVYDDAHLGHARSAIAFDLLRRTLELSGYEVVLVRNFTDIDDKIINKALKENKSIQELSSIYIESYTRDLNALNVKKPSLEPKASEYLDAMVGMIETLLEKNIAYQISNGDIYLDTSKDKDYGSLSVHNSSIEFGRIGLVQEKRLEQDFVLWKSYKGDNDVGFDSPLGKGRPGWHIECSSMIFKTLALTDTPYQIDIHAGGADLLFPHHENEACQTRCAFGVELAKYWMHNGFVNINNEKMSKSLGNSFFIKDALKNYDGEILRNYLLGVHYRSVLNFNEEDLLMSKKRLDKIYRLKQRVLGTLGGINPNFKKEILECMQDDLNISKALSVLESMLSSTNEKLDQNPKNKALKGEILANLKFIEELLGIGFKDPVEYFQLGVSGSEKQEIENKIEERKRAKEQKDFLKADNIREELLKQKIALMDTPQGTIWEKFF</sequence>
<accession>B2UU37</accession>
<protein>
    <recommendedName>
        <fullName evidence="1">Cysteine--tRNA ligase</fullName>
        <ecNumber evidence="1">6.1.1.16</ecNumber>
    </recommendedName>
    <alternativeName>
        <fullName evidence="1">Cysteinyl-tRNA synthetase</fullName>
        <shortName evidence="1">CysRS</shortName>
    </alternativeName>
</protein>
<reference key="1">
    <citation type="submission" date="2008-05" db="EMBL/GenBank/DDBJ databases">
        <title>Genome sequence of Helicobacter pylori from the remote Amazon: traces of Asian ancestry of the first Americans.</title>
        <authorList>
            <person name="Kersulyte D."/>
            <person name="Kalia A."/>
            <person name="Gilman R.H."/>
            <person name="Berg D.E."/>
        </authorList>
    </citation>
    <scope>NUCLEOTIDE SEQUENCE [LARGE SCALE GENOMIC DNA]</scope>
    <source>
        <strain>Shi470</strain>
    </source>
</reference>
<keyword id="KW-0030">Aminoacyl-tRNA synthetase</keyword>
<keyword id="KW-0067">ATP-binding</keyword>
<keyword id="KW-0963">Cytoplasm</keyword>
<keyword id="KW-0436">Ligase</keyword>
<keyword id="KW-0479">Metal-binding</keyword>
<keyword id="KW-0547">Nucleotide-binding</keyword>
<keyword id="KW-0648">Protein biosynthesis</keyword>
<keyword id="KW-0862">Zinc</keyword>
<evidence type="ECO:0000255" key="1">
    <source>
        <dbReference type="HAMAP-Rule" id="MF_00041"/>
    </source>
</evidence>
<proteinExistence type="inferred from homology"/>
<feature type="chain" id="PRO_1000090845" description="Cysteine--tRNA ligase">
    <location>
        <begin position="1"/>
        <end position="465"/>
    </location>
</feature>
<feature type="short sequence motif" description="'HIGH' region">
    <location>
        <begin position="29"/>
        <end position="39"/>
    </location>
</feature>
<feature type="short sequence motif" description="'KMSKS' region">
    <location>
        <begin position="269"/>
        <end position="273"/>
    </location>
</feature>
<feature type="binding site" evidence="1">
    <location>
        <position position="27"/>
    </location>
    <ligand>
        <name>Zn(2+)</name>
        <dbReference type="ChEBI" id="CHEBI:29105"/>
    </ligand>
</feature>
<feature type="binding site" evidence="1">
    <location>
        <position position="207"/>
    </location>
    <ligand>
        <name>Zn(2+)</name>
        <dbReference type="ChEBI" id="CHEBI:29105"/>
    </ligand>
</feature>
<feature type="binding site" evidence="1">
    <location>
        <position position="237"/>
    </location>
    <ligand>
        <name>Zn(2+)</name>
        <dbReference type="ChEBI" id="CHEBI:29105"/>
    </ligand>
</feature>
<feature type="binding site" evidence="1">
    <location>
        <position position="241"/>
    </location>
    <ligand>
        <name>Zn(2+)</name>
        <dbReference type="ChEBI" id="CHEBI:29105"/>
    </ligand>
</feature>
<feature type="binding site" evidence="1">
    <location>
        <position position="272"/>
    </location>
    <ligand>
        <name>ATP</name>
        <dbReference type="ChEBI" id="CHEBI:30616"/>
    </ligand>
</feature>
<organism>
    <name type="scientific">Helicobacter pylori (strain Shi470)</name>
    <dbReference type="NCBI Taxonomy" id="512562"/>
    <lineage>
        <taxon>Bacteria</taxon>
        <taxon>Pseudomonadati</taxon>
        <taxon>Campylobacterota</taxon>
        <taxon>Epsilonproteobacteria</taxon>
        <taxon>Campylobacterales</taxon>
        <taxon>Helicobacteraceae</taxon>
        <taxon>Helicobacter</taxon>
    </lineage>
</organism>
<gene>
    <name evidence="1" type="primary">cysS</name>
    <name type="ordered locus">HPSH_04670</name>
</gene>
<name>SYC_HELPS</name>
<comment type="catalytic activity">
    <reaction evidence="1">
        <text>tRNA(Cys) + L-cysteine + ATP = L-cysteinyl-tRNA(Cys) + AMP + diphosphate</text>
        <dbReference type="Rhea" id="RHEA:17773"/>
        <dbReference type="Rhea" id="RHEA-COMP:9661"/>
        <dbReference type="Rhea" id="RHEA-COMP:9679"/>
        <dbReference type="ChEBI" id="CHEBI:30616"/>
        <dbReference type="ChEBI" id="CHEBI:33019"/>
        <dbReference type="ChEBI" id="CHEBI:35235"/>
        <dbReference type="ChEBI" id="CHEBI:78442"/>
        <dbReference type="ChEBI" id="CHEBI:78517"/>
        <dbReference type="ChEBI" id="CHEBI:456215"/>
        <dbReference type="EC" id="6.1.1.16"/>
    </reaction>
</comment>
<comment type="cofactor">
    <cofactor evidence="1">
        <name>Zn(2+)</name>
        <dbReference type="ChEBI" id="CHEBI:29105"/>
    </cofactor>
    <text evidence="1">Binds 1 zinc ion per subunit.</text>
</comment>
<comment type="subunit">
    <text evidence="1">Monomer.</text>
</comment>
<comment type="subcellular location">
    <subcellularLocation>
        <location evidence="1">Cytoplasm</location>
    </subcellularLocation>
</comment>
<comment type="similarity">
    <text evidence="1">Belongs to the class-I aminoacyl-tRNA synthetase family.</text>
</comment>
<dbReference type="EC" id="6.1.1.16" evidence="1"/>
<dbReference type="EMBL" id="CP001072">
    <property type="protein sequence ID" value="ACD48369.1"/>
    <property type="molecule type" value="Genomic_DNA"/>
</dbReference>
<dbReference type="RefSeq" id="WP_000471308.1">
    <property type="nucleotide sequence ID" value="NC_010698.2"/>
</dbReference>
<dbReference type="SMR" id="B2UU37"/>
<dbReference type="KEGG" id="hps:HPSH_04670"/>
<dbReference type="HOGENOM" id="CLU_013528_0_1_7"/>
<dbReference type="GO" id="GO:0005829">
    <property type="term" value="C:cytosol"/>
    <property type="evidence" value="ECO:0007669"/>
    <property type="project" value="TreeGrafter"/>
</dbReference>
<dbReference type="GO" id="GO:0005524">
    <property type="term" value="F:ATP binding"/>
    <property type="evidence" value="ECO:0007669"/>
    <property type="project" value="UniProtKB-UniRule"/>
</dbReference>
<dbReference type="GO" id="GO:0004817">
    <property type="term" value="F:cysteine-tRNA ligase activity"/>
    <property type="evidence" value="ECO:0007669"/>
    <property type="project" value="UniProtKB-UniRule"/>
</dbReference>
<dbReference type="GO" id="GO:0008270">
    <property type="term" value="F:zinc ion binding"/>
    <property type="evidence" value="ECO:0007669"/>
    <property type="project" value="UniProtKB-UniRule"/>
</dbReference>
<dbReference type="GO" id="GO:0006423">
    <property type="term" value="P:cysteinyl-tRNA aminoacylation"/>
    <property type="evidence" value="ECO:0007669"/>
    <property type="project" value="UniProtKB-UniRule"/>
</dbReference>
<dbReference type="CDD" id="cd00672">
    <property type="entry name" value="CysRS_core"/>
    <property type="match status" value="1"/>
</dbReference>
<dbReference type="FunFam" id="1.20.120.1910:FF:000013">
    <property type="entry name" value="Cysteine--tRNA ligase"/>
    <property type="match status" value="1"/>
</dbReference>
<dbReference type="FunFam" id="3.40.50.620:FF:000339">
    <property type="entry name" value="Cysteine--tRNA ligase"/>
    <property type="match status" value="1"/>
</dbReference>
<dbReference type="Gene3D" id="1.20.120.1910">
    <property type="entry name" value="Cysteine-tRNA ligase, C-terminal anti-codon recognition domain"/>
    <property type="match status" value="1"/>
</dbReference>
<dbReference type="Gene3D" id="3.40.50.620">
    <property type="entry name" value="HUPs"/>
    <property type="match status" value="1"/>
</dbReference>
<dbReference type="HAMAP" id="MF_00041">
    <property type="entry name" value="Cys_tRNA_synth"/>
    <property type="match status" value="1"/>
</dbReference>
<dbReference type="InterPro" id="IPR015803">
    <property type="entry name" value="Cys-tRNA-ligase"/>
</dbReference>
<dbReference type="InterPro" id="IPR015273">
    <property type="entry name" value="Cys-tRNA-synt_Ia_DALR"/>
</dbReference>
<dbReference type="InterPro" id="IPR024909">
    <property type="entry name" value="Cys-tRNA/MSH_ligase"/>
</dbReference>
<dbReference type="InterPro" id="IPR014729">
    <property type="entry name" value="Rossmann-like_a/b/a_fold"/>
</dbReference>
<dbReference type="InterPro" id="IPR032678">
    <property type="entry name" value="tRNA-synt_1_cat_dom"/>
</dbReference>
<dbReference type="InterPro" id="IPR009080">
    <property type="entry name" value="tRNAsynth_Ia_anticodon-bd"/>
</dbReference>
<dbReference type="NCBIfam" id="TIGR00435">
    <property type="entry name" value="cysS"/>
    <property type="match status" value="1"/>
</dbReference>
<dbReference type="PANTHER" id="PTHR10890:SF3">
    <property type="entry name" value="CYSTEINE--TRNA LIGASE, CYTOPLASMIC"/>
    <property type="match status" value="1"/>
</dbReference>
<dbReference type="PANTHER" id="PTHR10890">
    <property type="entry name" value="CYSTEINYL-TRNA SYNTHETASE"/>
    <property type="match status" value="1"/>
</dbReference>
<dbReference type="Pfam" id="PF09190">
    <property type="entry name" value="DALR_2"/>
    <property type="match status" value="1"/>
</dbReference>
<dbReference type="Pfam" id="PF01406">
    <property type="entry name" value="tRNA-synt_1e"/>
    <property type="match status" value="1"/>
</dbReference>
<dbReference type="PRINTS" id="PR00983">
    <property type="entry name" value="TRNASYNTHCYS"/>
</dbReference>
<dbReference type="SMART" id="SM00840">
    <property type="entry name" value="DALR_2"/>
    <property type="match status" value="1"/>
</dbReference>
<dbReference type="SUPFAM" id="SSF47323">
    <property type="entry name" value="Anticodon-binding domain of a subclass of class I aminoacyl-tRNA synthetases"/>
    <property type="match status" value="1"/>
</dbReference>
<dbReference type="SUPFAM" id="SSF52374">
    <property type="entry name" value="Nucleotidylyl transferase"/>
    <property type="match status" value="1"/>
</dbReference>